<accession>P55945</accession>
<accession>Q6LBT7</accession>
<feature type="chain" id="PRO_0000197310" description="Metallothionein">
    <location>
        <begin position="1"/>
        <end position="60"/>
    </location>
</feature>
<feature type="region of interest" description="Beta">
    <location>
        <begin position="1"/>
        <end position="28"/>
    </location>
</feature>
<feature type="region of interest" description="Alpha">
    <location>
        <begin position="29"/>
        <end position="60"/>
    </location>
</feature>
<feature type="binding site" evidence="2">
    <location>
        <position position="4"/>
    </location>
    <ligand>
        <name>a divalent metal cation</name>
        <dbReference type="ChEBI" id="CHEBI:60240"/>
        <label>1</label>
        <note>in cluster B</note>
    </ligand>
</feature>
<feature type="binding site" evidence="2">
    <location>
        <position position="6"/>
    </location>
    <ligand>
        <name>a divalent metal cation</name>
        <dbReference type="ChEBI" id="CHEBI:60240"/>
        <label>1</label>
        <note>in cluster B</note>
    </ligand>
</feature>
<feature type="binding site" evidence="2">
    <location>
        <position position="6"/>
    </location>
    <ligand>
        <name>a divalent metal cation</name>
        <dbReference type="ChEBI" id="CHEBI:60240"/>
        <label>2</label>
        <note>in cluster B</note>
    </ligand>
</feature>
<feature type="binding site" evidence="2">
    <location>
        <position position="12"/>
    </location>
    <ligand>
        <name>a divalent metal cation</name>
        <dbReference type="ChEBI" id="CHEBI:60240"/>
        <label>2</label>
        <note>in cluster B</note>
    </ligand>
</feature>
<feature type="binding site" evidence="2">
    <location>
        <position position="14"/>
    </location>
    <ligand>
        <name>a divalent metal cation</name>
        <dbReference type="ChEBI" id="CHEBI:60240"/>
        <label>2</label>
        <note>in cluster B</note>
    </ligand>
</feature>
<feature type="binding site" evidence="2">
    <location>
        <position position="14"/>
    </location>
    <ligand>
        <name>a divalent metal cation</name>
        <dbReference type="ChEBI" id="CHEBI:60240"/>
        <label>3</label>
        <note>in cluster B</note>
    </ligand>
</feature>
<feature type="binding site" evidence="2">
    <location>
        <position position="18"/>
    </location>
    <ligand>
        <name>a divalent metal cation</name>
        <dbReference type="ChEBI" id="CHEBI:60240"/>
        <label>3</label>
        <note>in cluster B</note>
    </ligand>
</feature>
<feature type="binding site" evidence="2">
    <location>
        <position position="20"/>
    </location>
    <ligand>
        <name>a divalent metal cation</name>
        <dbReference type="ChEBI" id="CHEBI:60240"/>
        <label>1</label>
        <note>in cluster B</note>
    </ligand>
</feature>
<feature type="binding site" evidence="2">
    <location>
        <position position="23"/>
    </location>
    <ligand>
        <name>a divalent metal cation</name>
        <dbReference type="ChEBI" id="CHEBI:60240"/>
        <label>1</label>
        <note>in cluster B</note>
    </ligand>
</feature>
<feature type="binding site" evidence="2">
    <location>
        <position position="23"/>
    </location>
    <ligand>
        <name>a divalent metal cation</name>
        <dbReference type="ChEBI" id="CHEBI:60240"/>
        <label>3</label>
        <note>in cluster B</note>
    </ligand>
</feature>
<feature type="binding site" evidence="2">
    <location>
        <position position="25"/>
    </location>
    <ligand>
        <name>a divalent metal cation</name>
        <dbReference type="ChEBI" id="CHEBI:60240"/>
        <label>2</label>
        <note>in cluster B</note>
    </ligand>
</feature>
<feature type="binding site" evidence="2">
    <location>
        <position position="28"/>
    </location>
    <ligand>
        <name>a divalent metal cation</name>
        <dbReference type="ChEBI" id="CHEBI:60240"/>
        <label>3</label>
        <note>in cluster B</note>
    </ligand>
</feature>
<feature type="binding site" evidence="2">
    <location>
        <position position="32"/>
    </location>
    <ligand>
        <name>a divalent metal cation</name>
        <dbReference type="ChEBI" id="CHEBI:60240"/>
        <label>4</label>
        <note>in cluster A</note>
    </ligand>
</feature>
<feature type="binding site" evidence="2">
    <location>
        <position position="33"/>
    </location>
    <ligand>
        <name>a divalent metal cation</name>
        <dbReference type="ChEBI" id="CHEBI:60240"/>
        <label>4</label>
        <note>in cluster A</note>
    </ligand>
</feature>
<feature type="binding site" evidence="2">
    <location>
        <position position="33"/>
    </location>
    <ligand>
        <name>a divalent metal cation</name>
        <dbReference type="ChEBI" id="CHEBI:60240"/>
        <label>5</label>
        <note>in cluster A</note>
    </ligand>
</feature>
<feature type="binding site" evidence="2">
    <location>
        <position position="35"/>
    </location>
    <ligand>
        <name>a divalent metal cation</name>
        <dbReference type="ChEBI" id="CHEBI:60240"/>
        <label>5</label>
        <note>in cluster A</note>
    </ligand>
</feature>
<feature type="binding site" evidence="2">
    <location>
        <position position="36"/>
    </location>
    <ligand>
        <name>a divalent metal cation</name>
        <dbReference type="ChEBI" id="CHEBI:60240"/>
        <label>5</label>
        <note>in cluster A</note>
    </ligand>
</feature>
<feature type="binding site" evidence="2">
    <location>
        <position position="36"/>
    </location>
    <ligand>
        <name>a divalent metal cation</name>
        <dbReference type="ChEBI" id="CHEBI:60240"/>
        <label>6</label>
        <note>in cluster A</note>
    </ligand>
</feature>
<feature type="binding site" evidence="2">
    <location>
        <position position="40"/>
    </location>
    <ligand>
        <name>a divalent metal cation</name>
        <dbReference type="ChEBI" id="CHEBI:60240"/>
        <label>6</label>
        <note>in cluster A</note>
    </ligand>
</feature>
<feature type="binding site" evidence="2">
    <location>
        <position position="43"/>
    </location>
    <ligand>
        <name>a divalent metal cation</name>
        <dbReference type="ChEBI" id="CHEBI:60240"/>
        <label>4</label>
        <note>in cluster A</note>
    </ligand>
</feature>
<feature type="binding site" evidence="2">
    <location>
        <position position="43"/>
    </location>
    <ligand>
        <name>a divalent metal cation</name>
        <dbReference type="ChEBI" id="CHEBI:60240"/>
        <label>6</label>
        <note>in cluster A</note>
    </ligand>
</feature>
<feature type="binding site" evidence="2">
    <location>
        <position position="47"/>
    </location>
    <ligand>
        <name>a divalent metal cation</name>
        <dbReference type="ChEBI" id="CHEBI:60240"/>
        <label>4</label>
        <note>in cluster A</note>
    </ligand>
</feature>
<feature type="binding site" evidence="2">
    <location>
        <position position="49"/>
    </location>
    <ligand>
        <name>a divalent metal cation</name>
        <dbReference type="ChEBI" id="CHEBI:60240"/>
        <label>5</label>
        <note>in cluster A</note>
    </ligand>
</feature>
<feature type="binding site" evidence="2">
    <location>
        <position position="49"/>
    </location>
    <ligand>
        <name>a divalent metal cation</name>
        <dbReference type="ChEBI" id="CHEBI:60240"/>
        <label>7</label>
        <note>in cluster A</note>
    </ligand>
</feature>
<feature type="binding site" evidence="3">
    <location>
        <position position="54"/>
    </location>
    <ligand>
        <name>a divalent metal cation</name>
        <dbReference type="ChEBI" id="CHEBI:60240"/>
        <label>7</label>
        <note>in cluster A</note>
    </ligand>
</feature>
<feature type="binding site" evidence="2">
    <location>
        <position position="58"/>
    </location>
    <ligand>
        <name>a divalent metal cation</name>
        <dbReference type="ChEBI" id="CHEBI:60240"/>
        <label>7</label>
        <note>in cluster A</note>
    </ligand>
</feature>
<feature type="binding site" evidence="2">
    <location>
        <position position="59"/>
    </location>
    <ligand>
        <name>a divalent metal cation</name>
        <dbReference type="ChEBI" id="CHEBI:60240"/>
        <label>6</label>
        <note>in cluster A</note>
    </ligand>
</feature>
<feature type="binding site" evidence="2">
    <location>
        <position position="59"/>
    </location>
    <ligand>
        <name>a divalent metal cation</name>
        <dbReference type="ChEBI" id="CHEBI:60240"/>
        <label>7</label>
        <note>in cluster A</note>
    </ligand>
</feature>
<feature type="modified residue" description="N-acetylmethionine" evidence="4">
    <location>
        <position position="1"/>
    </location>
</feature>
<protein>
    <recommendedName>
        <fullName>Metallothionein</fullName>
        <shortName>MT</shortName>
    </recommendedName>
</protein>
<name>MT_PSEAM</name>
<reference key="1">
    <citation type="journal article" date="1989" name="Can. J. Zool.">
        <title>Molecular cloning of metallothionein cDNA and analysis of metallothionein gene expression in winter flounder tissues.</title>
        <authorList>
            <person name="Chan K.-M."/>
            <person name="Davidson W.S."/>
            <person name="Hew C.-L."/>
            <person name="Fletcher G.L."/>
        </authorList>
    </citation>
    <scope>NUCLEOTIDE SEQUENCE [MRNA]</scope>
    <scope>PROTEIN SEQUENCE OF 1-25</scope>
    <scope>ACETYLATION AT MET-1</scope>
    <source>
        <tissue>Liver</tissue>
    </source>
</reference>
<keyword id="KW-0007">Acetylation</keyword>
<keyword id="KW-0186">Copper</keyword>
<keyword id="KW-0903">Direct protein sequencing</keyword>
<keyword id="KW-0479">Metal-binding</keyword>
<keyword id="KW-0480">Metal-thiolate cluster</keyword>
<comment type="function">
    <text evidence="1">Metallothioneins have a high content of cysteine residues that bind various heavy metals.</text>
</comment>
<comment type="domain">
    <text>Class I metallothioneins contain 2 metal-binding domains: four divalent ions are chelated within cluster A of the alpha domain and are coordinated via cysteinyl thiolate bridges to 11 cysteine ligands. Cluster B, the corresponding region within the beta domain, can ligate three divalent ions to 9 cysteines.</text>
</comment>
<comment type="similarity">
    <text evidence="5">Belongs to the metallothionein superfamily. Type 1 family.</text>
</comment>
<dbReference type="EMBL" id="X13594">
    <property type="protein sequence ID" value="CAA31930.1"/>
    <property type="molecule type" value="mRNA"/>
</dbReference>
<dbReference type="SMR" id="P55945"/>
<dbReference type="GO" id="GO:0046872">
    <property type="term" value="F:metal ion binding"/>
    <property type="evidence" value="ECO:0007669"/>
    <property type="project" value="UniProtKB-KW"/>
</dbReference>
<dbReference type="FunFam" id="4.10.10.10:FF:000001">
    <property type="entry name" value="Metallothionein"/>
    <property type="match status" value="1"/>
</dbReference>
<dbReference type="Gene3D" id="4.10.10.10">
    <property type="entry name" value="Metallothionein Isoform II"/>
    <property type="match status" value="1"/>
</dbReference>
<dbReference type="InterPro" id="IPR017854">
    <property type="entry name" value="Metalthion_dom_sf"/>
</dbReference>
<dbReference type="InterPro" id="IPR023587">
    <property type="entry name" value="Metalthion_dom_sf_vert"/>
</dbReference>
<dbReference type="InterPro" id="IPR000006">
    <property type="entry name" value="Metalthion_vert"/>
</dbReference>
<dbReference type="InterPro" id="IPR018064">
    <property type="entry name" value="Metalthion_vert_metal_BS"/>
</dbReference>
<dbReference type="PANTHER" id="PTHR23299">
    <property type="entry name" value="METALLOTHIONEIN"/>
    <property type="match status" value="1"/>
</dbReference>
<dbReference type="PANTHER" id="PTHR23299:SF24">
    <property type="entry name" value="METALLOTHIONEIN-1X"/>
    <property type="match status" value="1"/>
</dbReference>
<dbReference type="Pfam" id="PF00131">
    <property type="entry name" value="Metallothio"/>
    <property type="match status" value="1"/>
</dbReference>
<dbReference type="PRINTS" id="PR00860">
    <property type="entry name" value="MTVERTEBRATE"/>
</dbReference>
<dbReference type="SUPFAM" id="SSF57868">
    <property type="entry name" value="Metallothionein"/>
    <property type="match status" value="1"/>
</dbReference>
<dbReference type="PROSITE" id="PS00203">
    <property type="entry name" value="METALLOTHIONEIN_VRT"/>
    <property type="match status" value="1"/>
</dbReference>
<organism>
    <name type="scientific">Pseudopleuronectes americanus</name>
    <name type="common">Winter flounder</name>
    <name type="synonym">Pleuronectes americanus</name>
    <dbReference type="NCBI Taxonomy" id="8265"/>
    <lineage>
        <taxon>Eukaryota</taxon>
        <taxon>Metazoa</taxon>
        <taxon>Chordata</taxon>
        <taxon>Craniata</taxon>
        <taxon>Vertebrata</taxon>
        <taxon>Euteleostomi</taxon>
        <taxon>Actinopterygii</taxon>
        <taxon>Neopterygii</taxon>
        <taxon>Teleostei</taxon>
        <taxon>Neoteleostei</taxon>
        <taxon>Acanthomorphata</taxon>
        <taxon>Carangaria</taxon>
        <taxon>Pleuronectiformes</taxon>
        <taxon>Pleuronectoidei</taxon>
        <taxon>Pleuronectidae</taxon>
        <taxon>Pseudopleuronectes</taxon>
    </lineage>
</organism>
<proteinExistence type="evidence at protein level"/>
<sequence>MDPCECSKTGTCNCGGSCTCKNCSCTTCTKSCCPCCPSGCPKCASGCVCKGKTCDTTCCQ</sequence>
<gene>
    <name type="primary">mt</name>
</gene>
<evidence type="ECO:0000250" key="1"/>
<evidence type="ECO:0000250" key="2">
    <source>
        <dbReference type="UniProtKB" id="P02795"/>
    </source>
</evidence>
<evidence type="ECO:0000250" key="3">
    <source>
        <dbReference type="UniProtKB" id="P62339"/>
    </source>
</evidence>
<evidence type="ECO:0000269" key="4">
    <source ref="1"/>
</evidence>
<evidence type="ECO:0000305" key="5"/>